<gene>
    <name evidence="1" type="primary">disA</name>
    <name type="ordered locus">FRAAL6529</name>
</gene>
<sequence>MAGPPGDDIFRATLAAVAPGTPFRDGLERILRGHTGALIVLGHDKVVEGLCTGGFELDVEFSATRLRELAKMDGAIVLSSDLQRIVRAAVHLVPDPTVPTEESGTRHRTAERVAKQTEYPVISVSQSMHIIALYVAGRRYVLDGSAAILSRANQALATLERYKLRLDEVAGTLSALEIEDLVTVRDAISVSQRLEMVRRIADEIEGYVVELGTDGRLLSLQLEELMAGVETERELTVRDYLPAGSKAGSAAQVLSELSAMSPTDLLDLTVLARVIGFSGGADILDRQISPRGYRMLAKVPRLPRMVVDRLVDHFGTLQKLLAAGVDDLQAVDGVGETRARAVREGLSRLAESSILERYV</sequence>
<accession>Q0RBN2</accession>
<evidence type="ECO:0000255" key="1">
    <source>
        <dbReference type="HAMAP-Rule" id="MF_01438"/>
    </source>
</evidence>
<evidence type="ECO:0000255" key="2">
    <source>
        <dbReference type="PROSITE-ProRule" id="PRU01130"/>
    </source>
</evidence>
<protein>
    <recommendedName>
        <fullName evidence="1">DNA integrity scanning protein DisA</fullName>
    </recommendedName>
    <alternativeName>
        <fullName evidence="1">Cyclic di-AMP synthase</fullName>
        <shortName evidence="1">c-di-AMP synthase</shortName>
    </alternativeName>
    <alternativeName>
        <fullName evidence="1">Diadenylate cyclase</fullName>
        <ecNumber evidence="1">2.7.7.85</ecNumber>
    </alternativeName>
</protein>
<reference key="1">
    <citation type="journal article" date="2007" name="Genome Res.">
        <title>Genome characteristics of facultatively symbiotic Frankia sp. strains reflect host range and host plant biogeography.</title>
        <authorList>
            <person name="Normand P."/>
            <person name="Lapierre P."/>
            <person name="Tisa L.S."/>
            <person name="Gogarten J.P."/>
            <person name="Alloisio N."/>
            <person name="Bagnarol E."/>
            <person name="Bassi C.A."/>
            <person name="Berry A.M."/>
            <person name="Bickhart D.M."/>
            <person name="Choisne N."/>
            <person name="Couloux A."/>
            <person name="Cournoyer B."/>
            <person name="Cruveiller S."/>
            <person name="Daubin V."/>
            <person name="Demange N."/>
            <person name="Francino M.P."/>
            <person name="Goltsman E."/>
            <person name="Huang Y."/>
            <person name="Kopp O.R."/>
            <person name="Labarre L."/>
            <person name="Lapidus A."/>
            <person name="Lavire C."/>
            <person name="Marechal J."/>
            <person name="Martinez M."/>
            <person name="Mastronunzio J.E."/>
            <person name="Mullin B.C."/>
            <person name="Niemann J."/>
            <person name="Pujic P."/>
            <person name="Rawnsley T."/>
            <person name="Rouy Z."/>
            <person name="Schenowitz C."/>
            <person name="Sellstedt A."/>
            <person name="Tavares F."/>
            <person name="Tomkins J.P."/>
            <person name="Vallenet D."/>
            <person name="Valverde C."/>
            <person name="Wall L.G."/>
            <person name="Wang Y."/>
            <person name="Medigue C."/>
            <person name="Benson D.R."/>
        </authorList>
    </citation>
    <scope>NUCLEOTIDE SEQUENCE [LARGE SCALE GENOMIC DNA]</scope>
    <source>
        <strain>DSM 45986 / CECT 9034 / ACN14a</strain>
    </source>
</reference>
<proteinExistence type="inferred from homology"/>
<organism>
    <name type="scientific">Frankia alni (strain DSM 45986 / CECT 9034 / ACN14a)</name>
    <dbReference type="NCBI Taxonomy" id="326424"/>
    <lineage>
        <taxon>Bacteria</taxon>
        <taxon>Bacillati</taxon>
        <taxon>Actinomycetota</taxon>
        <taxon>Actinomycetes</taxon>
        <taxon>Frankiales</taxon>
        <taxon>Frankiaceae</taxon>
        <taxon>Frankia</taxon>
    </lineage>
</organism>
<feature type="chain" id="PRO_1000017371" description="DNA integrity scanning protein DisA">
    <location>
        <begin position="1"/>
        <end position="359"/>
    </location>
</feature>
<feature type="domain" description="DAC" evidence="2">
    <location>
        <begin position="7"/>
        <end position="146"/>
    </location>
</feature>
<feature type="binding site" evidence="1">
    <location>
        <position position="74"/>
    </location>
    <ligand>
        <name>ATP</name>
        <dbReference type="ChEBI" id="CHEBI:30616"/>
    </ligand>
</feature>
<feature type="binding site" evidence="1">
    <location>
        <position position="92"/>
    </location>
    <ligand>
        <name>ATP</name>
        <dbReference type="ChEBI" id="CHEBI:30616"/>
    </ligand>
</feature>
<feature type="binding site" evidence="1">
    <location>
        <begin position="105"/>
        <end position="109"/>
    </location>
    <ligand>
        <name>ATP</name>
        <dbReference type="ChEBI" id="CHEBI:30616"/>
    </ligand>
</feature>
<name>DISA_FRAAA</name>
<dbReference type="EC" id="2.7.7.85" evidence="1"/>
<dbReference type="EMBL" id="CT573213">
    <property type="protein sequence ID" value="CAJ65152.1"/>
    <property type="molecule type" value="Genomic_DNA"/>
</dbReference>
<dbReference type="RefSeq" id="WP_011607569.1">
    <property type="nucleotide sequence ID" value="NC_008278.1"/>
</dbReference>
<dbReference type="SMR" id="Q0RBN2"/>
<dbReference type="STRING" id="326424.FRAAL6529"/>
<dbReference type="KEGG" id="fal:FRAAL6529"/>
<dbReference type="eggNOG" id="COG1623">
    <property type="taxonomic scope" value="Bacteria"/>
</dbReference>
<dbReference type="HOGENOM" id="CLU_787128_0_0_11"/>
<dbReference type="OrthoDB" id="41841at2"/>
<dbReference type="Proteomes" id="UP000000657">
    <property type="component" value="Chromosome"/>
</dbReference>
<dbReference type="GO" id="GO:0004016">
    <property type="term" value="F:adenylate cyclase activity"/>
    <property type="evidence" value="ECO:0007669"/>
    <property type="project" value="TreeGrafter"/>
</dbReference>
<dbReference type="GO" id="GO:0005524">
    <property type="term" value="F:ATP binding"/>
    <property type="evidence" value="ECO:0007669"/>
    <property type="project" value="UniProtKB-UniRule"/>
</dbReference>
<dbReference type="GO" id="GO:0106408">
    <property type="term" value="F:diadenylate cyclase activity"/>
    <property type="evidence" value="ECO:0007669"/>
    <property type="project" value="UniProtKB-EC"/>
</dbReference>
<dbReference type="GO" id="GO:0003677">
    <property type="term" value="F:DNA binding"/>
    <property type="evidence" value="ECO:0007669"/>
    <property type="project" value="UniProtKB-UniRule"/>
</dbReference>
<dbReference type="GO" id="GO:0006281">
    <property type="term" value="P:DNA repair"/>
    <property type="evidence" value="ECO:0007669"/>
    <property type="project" value="UniProtKB-UniRule"/>
</dbReference>
<dbReference type="FunFam" id="1.10.150.20:FF:000016">
    <property type="entry name" value="DNA integrity scanning protein DisA"/>
    <property type="match status" value="1"/>
</dbReference>
<dbReference type="FunFam" id="1.20.1260.110:FF:000002">
    <property type="entry name" value="DNA integrity scanning protein DisA"/>
    <property type="match status" value="1"/>
</dbReference>
<dbReference type="FunFam" id="3.40.1700.10:FF:000001">
    <property type="entry name" value="DNA integrity scanning protein DisA"/>
    <property type="match status" value="1"/>
</dbReference>
<dbReference type="Gene3D" id="1.10.150.20">
    <property type="entry name" value="5' to 3' exonuclease, C-terminal subdomain"/>
    <property type="match status" value="1"/>
</dbReference>
<dbReference type="Gene3D" id="1.20.1260.110">
    <property type="entry name" value="DNA integrity scanning linker region"/>
    <property type="match status" value="1"/>
</dbReference>
<dbReference type="Gene3D" id="3.40.1700.10">
    <property type="entry name" value="DNA integrity scanning protein, DisA, N-terminal domain"/>
    <property type="match status" value="1"/>
</dbReference>
<dbReference type="HAMAP" id="MF_01438">
    <property type="entry name" value="DisA"/>
    <property type="match status" value="1"/>
</dbReference>
<dbReference type="InterPro" id="IPR050338">
    <property type="entry name" value="DisA"/>
</dbReference>
<dbReference type="InterPro" id="IPR038331">
    <property type="entry name" value="DisA_sf"/>
</dbReference>
<dbReference type="InterPro" id="IPR036888">
    <property type="entry name" value="DNA_integrity_DisA_N_sf"/>
</dbReference>
<dbReference type="InterPro" id="IPR018906">
    <property type="entry name" value="DNA_integrity_scan_DisA_link"/>
</dbReference>
<dbReference type="InterPro" id="IPR003390">
    <property type="entry name" value="DNA_integrity_scan_DisA_N"/>
</dbReference>
<dbReference type="InterPro" id="IPR023763">
    <property type="entry name" value="DNA_integrity_scanning_protein"/>
</dbReference>
<dbReference type="InterPro" id="IPR010994">
    <property type="entry name" value="RuvA_2-like"/>
</dbReference>
<dbReference type="NCBIfam" id="NF010009">
    <property type="entry name" value="PRK13482.1"/>
    <property type="match status" value="1"/>
</dbReference>
<dbReference type="PANTHER" id="PTHR34185">
    <property type="entry name" value="DIADENYLATE CYCLASE"/>
    <property type="match status" value="1"/>
</dbReference>
<dbReference type="PANTHER" id="PTHR34185:SF3">
    <property type="entry name" value="DNA INTEGRITY SCANNING PROTEIN DISA"/>
    <property type="match status" value="1"/>
</dbReference>
<dbReference type="Pfam" id="PF02457">
    <property type="entry name" value="DAC"/>
    <property type="match status" value="1"/>
</dbReference>
<dbReference type="Pfam" id="PF10635">
    <property type="entry name" value="DisA-linker"/>
    <property type="match status" value="1"/>
</dbReference>
<dbReference type="SUPFAM" id="SSF47781">
    <property type="entry name" value="RuvA domain 2-like"/>
    <property type="match status" value="1"/>
</dbReference>
<dbReference type="SUPFAM" id="SSF143597">
    <property type="entry name" value="YojJ-like"/>
    <property type="match status" value="1"/>
</dbReference>
<dbReference type="PROSITE" id="PS51794">
    <property type="entry name" value="DAC"/>
    <property type="match status" value="1"/>
</dbReference>
<keyword id="KW-0067">ATP-binding</keyword>
<keyword id="KW-0227">DNA damage</keyword>
<keyword id="KW-0234">DNA repair</keyword>
<keyword id="KW-0238">DNA-binding</keyword>
<keyword id="KW-0460">Magnesium</keyword>
<keyword id="KW-0547">Nucleotide-binding</keyword>
<keyword id="KW-0548">Nucleotidyltransferase</keyword>
<keyword id="KW-1185">Reference proteome</keyword>
<keyword id="KW-0808">Transferase</keyword>
<comment type="function">
    <text evidence="1">Participates in a DNA-damage check-point that is active prior to asymmetric division when DNA is damaged. DisA forms globular foci that rapidly scan along the chromosomes during sporulation, searching for lesions. When a lesion is present, DisA pauses at the lesion site. This triggers a cellular response that culminates in a temporary block in sporulation initiation.</text>
</comment>
<comment type="function">
    <text evidence="1">Also has diadenylate cyclase activity, catalyzing the condensation of 2 ATP molecules into cyclic di-AMP (c-di-AMP). c-di-AMP acts as a signaling molecule that couples DNA integrity with progression of sporulation. The rise in c-di-AMP level generated by DisA while scanning the chromosome, operates as a positive signal that advances sporulation; upon encountering a lesion, the DisA focus arrests at the damaged site and halts c-di-AMP synthesis.</text>
</comment>
<comment type="catalytic activity">
    <reaction evidence="1">
        <text>2 ATP = 3',3'-c-di-AMP + 2 diphosphate</text>
        <dbReference type="Rhea" id="RHEA:35655"/>
        <dbReference type="ChEBI" id="CHEBI:30616"/>
        <dbReference type="ChEBI" id="CHEBI:33019"/>
        <dbReference type="ChEBI" id="CHEBI:71500"/>
        <dbReference type="EC" id="2.7.7.85"/>
    </reaction>
</comment>
<comment type="cofactor">
    <cofactor evidence="1">
        <name>Mg(2+)</name>
        <dbReference type="ChEBI" id="CHEBI:18420"/>
    </cofactor>
</comment>
<comment type="subunit">
    <text evidence="1">Homooctamer.</text>
</comment>
<comment type="similarity">
    <text evidence="1">Belongs to the DisA family.</text>
</comment>